<accession>Q332X3</accession>
<keyword id="KW-0150">Chloroplast</keyword>
<keyword id="KW-0472">Membrane</keyword>
<keyword id="KW-0520">NAD</keyword>
<keyword id="KW-0521">NADP</keyword>
<keyword id="KW-0934">Plastid</keyword>
<keyword id="KW-0618">Plastoquinone</keyword>
<keyword id="KW-0874">Quinone</keyword>
<keyword id="KW-0793">Thylakoid</keyword>
<keyword id="KW-1278">Translocase</keyword>
<keyword id="KW-0812">Transmembrane</keyword>
<keyword id="KW-1133">Transmembrane helix</keyword>
<keyword id="KW-0813">Transport</keyword>
<gene>
    <name evidence="1" type="primary">ndhC</name>
</gene>
<comment type="function">
    <text evidence="1">NDH shuttles electrons from NAD(P)H:plastoquinone, via FMN and iron-sulfur (Fe-S) centers, to quinones in the photosynthetic chain and possibly in a chloroplast respiratory chain. The immediate electron acceptor for the enzyme in this species is believed to be plastoquinone. Couples the redox reaction to proton translocation, and thus conserves the redox energy in a proton gradient.</text>
</comment>
<comment type="catalytic activity">
    <reaction evidence="1">
        <text>a plastoquinone + NADH + (n+1) H(+)(in) = a plastoquinol + NAD(+) + n H(+)(out)</text>
        <dbReference type="Rhea" id="RHEA:42608"/>
        <dbReference type="Rhea" id="RHEA-COMP:9561"/>
        <dbReference type="Rhea" id="RHEA-COMP:9562"/>
        <dbReference type="ChEBI" id="CHEBI:15378"/>
        <dbReference type="ChEBI" id="CHEBI:17757"/>
        <dbReference type="ChEBI" id="CHEBI:57540"/>
        <dbReference type="ChEBI" id="CHEBI:57945"/>
        <dbReference type="ChEBI" id="CHEBI:62192"/>
    </reaction>
</comment>
<comment type="catalytic activity">
    <reaction evidence="1">
        <text>a plastoquinone + NADPH + (n+1) H(+)(in) = a plastoquinol + NADP(+) + n H(+)(out)</text>
        <dbReference type="Rhea" id="RHEA:42612"/>
        <dbReference type="Rhea" id="RHEA-COMP:9561"/>
        <dbReference type="Rhea" id="RHEA-COMP:9562"/>
        <dbReference type="ChEBI" id="CHEBI:15378"/>
        <dbReference type="ChEBI" id="CHEBI:17757"/>
        <dbReference type="ChEBI" id="CHEBI:57783"/>
        <dbReference type="ChEBI" id="CHEBI:58349"/>
        <dbReference type="ChEBI" id="CHEBI:62192"/>
    </reaction>
</comment>
<comment type="subunit">
    <text evidence="1">NDH is composed of at least 16 different subunits, 5 of which are encoded in the nucleus.</text>
</comment>
<comment type="subcellular location">
    <subcellularLocation>
        <location evidence="1">Plastid</location>
        <location evidence="1">Chloroplast thylakoid membrane</location>
        <topology evidence="1">Multi-pass membrane protein</topology>
    </subcellularLocation>
</comment>
<comment type="similarity">
    <text evidence="1">Belongs to the complex I subunit 3 family.</text>
</comment>
<geneLocation type="chloroplast"/>
<protein>
    <recommendedName>
        <fullName evidence="1">NAD(P)H-quinone oxidoreductase subunit 3, chloroplastic</fullName>
        <ecNumber evidence="1">7.1.1.-</ecNumber>
    </recommendedName>
    <alternativeName>
        <fullName evidence="1">NAD(P)H dehydrogenase subunit 3</fullName>
    </alternativeName>
    <alternativeName>
        <fullName evidence="1">NADH-plastoquinone oxidoreductase subunit 3</fullName>
    </alternativeName>
</protein>
<evidence type="ECO:0000255" key="1">
    <source>
        <dbReference type="HAMAP-Rule" id="MF_01394"/>
    </source>
</evidence>
<dbReference type="EC" id="7.1.1.-" evidence="1"/>
<dbReference type="EMBL" id="DQ383816">
    <property type="protein sequence ID" value="ABD47238.1"/>
    <property type="molecule type" value="Genomic_DNA"/>
</dbReference>
<dbReference type="EMBL" id="AP007232">
    <property type="protein sequence ID" value="BAE47599.1"/>
    <property type="molecule type" value="Genomic_DNA"/>
</dbReference>
<dbReference type="RefSeq" id="YP_398334.1">
    <property type="nucleotide sequence ID" value="NC_007578.1"/>
</dbReference>
<dbReference type="SMR" id="Q332X3"/>
<dbReference type="GeneID" id="3772861"/>
<dbReference type="KEGG" id="lsv:3772861"/>
<dbReference type="OrthoDB" id="154075at2759"/>
<dbReference type="GO" id="GO:0009535">
    <property type="term" value="C:chloroplast thylakoid membrane"/>
    <property type="evidence" value="ECO:0007669"/>
    <property type="project" value="UniProtKB-SubCell"/>
</dbReference>
<dbReference type="GO" id="GO:0008137">
    <property type="term" value="F:NADH dehydrogenase (ubiquinone) activity"/>
    <property type="evidence" value="ECO:0007669"/>
    <property type="project" value="InterPro"/>
</dbReference>
<dbReference type="GO" id="GO:0048038">
    <property type="term" value="F:quinone binding"/>
    <property type="evidence" value="ECO:0007669"/>
    <property type="project" value="UniProtKB-KW"/>
</dbReference>
<dbReference type="GO" id="GO:0019684">
    <property type="term" value="P:photosynthesis, light reaction"/>
    <property type="evidence" value="ECO:0007669"/>
    <property type="project" value="UniProtKB-UniRule"/>
</dbReference>
<dbReference type="FunFam" id="1.20.58.1610:FF:000001">
    <property type="entry name" value="NAD(P)H-quinone oxidoreductase subunit 3, chloroplastic"/>
    <property type="match status" value="1"/>
</dbReference>
<dbReference type="Gene3D" id="1.20.58.1610">
    <property type="entry name" value="NADH:ubiquinone/plastoquinone oxidoreductase, chain 3"/>
    <property type="match status" value="1"/>
</dbReference>
<dbReference type="HAMAP" id="MF_01394">
    <property type="entry name" value="NDH1_NuoA"/>
    <property type="match status" value="1"/>
</dbReference>
<dbReference type="InterPro" id="IPR023043">
    <property type="entry name" value="NAD(P)H_OxRDtase_bac/plastid"/>
</dbReference>
<dbReference type="InterPro" id="IPR000440">
    <property type="entry name" value="NADH_UbQ/plastoQ_OxRdtase_su3"/>
</dbReference>
<dbReference type="InterPro" id="IPR038430">
    <property type="entry name" value="NDAH_ubi_oxred_su3_sf"/>
</dbReference>
<dbReference type="PANTHER" id="PTHR11058">
    <property type="entry name" value="NADH-UBIQUINONE OXIDOREDUCTASE CHAIN 3"/>
    <property type="match status" value="1"/>
</dbReference>
<dbReference type="PANTHER" id="PTHR11058:SF9">
    <property type="entry name" value="NADH-UBIQUINONE OXIDOREDUCTASE CHAIN 3"/>
    <property type="match status" value="1"/>
</dbReference>
<dbReference type="Pfam" id="PF00507">
    <property type="entry name" value="Oxidored_q4"/>
    <property type="match status" value="1"/>
</dbReference>
<sequence length="120" mass="13887">MFLLYEYDIFWAFLIISSLIPILVFFISGFLAPISKGPEKLSSYESGIEPIGDAWLQFRIRYYMFALVFVVFDVETVFLYPWAMSFDVLGVSVFVEALIFVLILIVGLVYAWRKGALEWS</sequence>
<feature type="chain" id="PRO_0000362843" description="NAD(P)H-quinone oxidoreductase subunit 3, chloroplastic">
    <location>
        <begin position="1"/>
        <end position="120"/>
    </location>
</feature>
<feature type="transmembrane region" description="Helical" evidence="1">
    <location>
        <begin position="9"/>
        <end position="29"/>
    </location>
</feature>
<feature type="transmembrane region" description="Helical" evidence="1">
    <location>
        <begin position="64"/>
        <end position="84"/>
    </location>
</feature>
<feature type="transmembrane region" description="Helical" evidence="1">
    <location>
        <begin position="88"/>
        <end position="108"/>
    </location>
</feature>
<proteinExistence type="inferred from homology"/>
<reference key="1">
    <citation type="submission" date="2004-08" db="EMBL/GenBank/DDBJ databases">
        <title>The complete genome sequence of the Lactuca sativa (lettuce) chloroplast.</title>
        <authorList>
            <person name="Kanamoto H."/>
            <person name="Yamashita A."/>
            <person name="Okumura S."/>
            <person name="Hattori M."/>
            <person name="Tomizawa K."/>
        </authorList>
    </citation>
    <scope>NUCLEOTIDE SEQUENCE [LARGE SCALE GENOMIC DNA]</scope>
</reference>
<reference key="2">
    <citation type="submission" date="2006-01" db="EMBL/GenBank/DDBJ databases">
        <title>A comparison of the first two published chloroplast genomes in Asteraceae: Lactuca and Helianthus.</title>
        <authorList>
            <person name="Timme R.E."/>
            <person name="Kuehl J.V."/>
            <person name="Boore J.L."/>
            <person name="Jansen R.K."/>
        </authorList>
    </citation>
    <scope>NUCLEOTIDE SEQUENCE [LARGE SCALE GENOMIC DNA]</scope>
</reference>
<name>NU3C_LACSA</name>
<organism>
    <name type="scientific">Lactuca sativa</name>
    <name type="common">Garden lettuce</name>
    <dbReference type="NCBI Taxonomy" id="4236"/>
    <lineage>
        <taxon>Eukaryota</taxon>
        <taxon>Viridiplantae</taxon>
        <taxon>Streptophyta</taxon>
        <taxon>Embryophyta</taxon>
        <taxon>Tracheophyta</taxon>
        <taxon>Spermatophyta</taxon>
        <taxon>Magnoliopsida</taxon>
        <taxon>eudicotyledons</taxon>
        <taxon>Gunneridae</taxon>
        <taxon>Pentapetalae</taxon>
        <taxon>asterids</taxon>
        <taxon>campanulids</taxon>
        <taxon>Asterales</taxon>
        <taxon>Asteraceae</taxon>
        <taxon>Cichorioideae</taxon>
        <taxon>Cichorieae</taxon>
        <taxon>Lactucinae</taxon>
        <taxon>Lactuca</taxon>
    </lineage>
</organism>